<proteinExistence type="inferred from homology"/>
<reference key="1">
    <citation type="journal article" date="2007" name="BMC Microbiol.">
        <title>Subtle genetic changes enhance virulence of methicillin resistant and sensitive Staphylococcus aureus.</title>
        <authorList>
            <person name="Highlander S.K."/>
            <person name="Hulten K.G."/>
            <person name="Qin X."/>
            <person name="Jiang H."/>
            <person name="Yerrapragada S."/>
            <person name="Mason E.O. Jr."/>
            <person name="Shang Y."/>
            <person name="Williams T.M."/>
            <person name="Fortunov R.M."/>
            <person name="Liu Y."/>
            <person name="Igboeli O."/>
            <person name="Petrosino J."/>
            <person name="Tirumalai M."/>
            <person name="Uzman A."/>
            <person name="Fox G.E."/>
            <person name="Cardenas A.M."/>
            <person name="Muzny D.M."/>
            <person name="Hemphill L."/>
            <person name="Ding Y."/>
            <person name="Dugan S."/>
            <person name="Blyth P.R."/>
            <person name="Buhay C.J."/>
            <person name="Dinh H.H."/>
            <person name="Hawes A.C."/>
            <person name="Holder M."/>
            <person name="Kovar C.L."/>
            <person name="Lee S.L."/>
            <person name="Liu W."/>
            <person name="Nazareth L.V."/>
            <person name="Wang Q."/>
            <person name="Zhou J."/>
            <person name="Kaplan S.L."/>
            <person name="Weinstock G.M."/>
        </authorList>
    </citation>
    <scope>NUCLEOTIDE SEQUENCE [LARGE SCALE GENOMIC DNA]</scope>
    <source>
        <strain>USA300 / TCH1516</strain>
    </source>
</reference>
<comment type="function">
    <text evidence="1">Catalyzes the condensation of the acetyl group of acetyl-CoA with 3-methyl-2-oxobutanoate (2-ketoisovalerate) to form 3-carboxy-3-hydroxy-4-methylpentanoate (2-isopropylmalate).</text>
</comment>
<comment type="catalytic activity">
    <reaction evidence="1">
        <text>3-methyl-2-oxobutanoate + acetyl-CoA + H2O = (2S)-2-isopropylmalate + CoA + H(+)</text>
        <dbReference type="Rhea" id="RHEA:21524"/>
        <dbReference type="ChEBI" id="CHEBI:1178"/>
        <dbReference type="ChEBI" id="CHEBI:11851"/>
        <dbReference type="ChEBI" id="CHEBI:15377"/>
        <dbReference type="ChEBI" id="CHEBI:15378"/>
        <dbReference type="ChEBI" id="CHEBI:57287"/>
        <dbReference type="ChEBI" id="CHEBI:57288"/>
        <dbReference type="EC" id="2.3.3.13"/>
    </reaction>
</comment>
<comment type="cofactor">
    <cofactor evidence="1">
        <name>Mn(2+)</name>
        <dbReference type="ChEBI" id="CHEBI:29035"/>
    </cofactor>
</comment>
<comment type="pathway">
    <text evidence="1">Amino-acid biosynthesis; L-leucine biosynthesis; L-leucine from 3-methyl-2-oxobutanoate: step 1/4.</text>
</comment>
<comment type="subunit">
    <text evidence="1">Homodimer.</text>
</comment>
<comment type="subcellular location">
    <subcellularLocation>
        <location evidence="1">Cytoplasm</location>
    </subcellularLocation>
</comment>
<comment type="similarity">
    <text evidence="1">Belongs to the alpha-IPM synthase/homocitrate synthase family. LeuA type 1 subfamily.</text>
</comment>
<sequence>MSSHIQIFDTTLRDGEQTPGVNFTFDERLRIALQLEKWGVDVIEAGFPASSTGSFKSVQAIAQTLTTTAVCGLARCKKSDIDAVYEATKDAAKPVVHVFIATSPIHLEHKLKMSQEDVLASIKEHVTYAKQLFDVVQFSPEDATRTELPFLVKCVQTAVDAGATVINIPDTVGYSYHDEYAHIFKTLTESVTSSNEIIYSAHCHDDLGMAVSNSLAAIEGGARRIEGTVNGIGERAGNAALEEVALALYVRNDHYGAQTALNLEETKKTSDLISRYAGIRVPRNKAIVGQNAFSHESGIHQDGVLKHRETYEIMTPQLVGVSTTELPLGKLSGKHAFSEKLKALGYDIDKEAQIDLFKQFKAIADKKKSVSDRDIHAIIQGSEHEHQALYKLETLQLQYVSSGLQSAVVVVKDKEGHIYQDSSIGTGSIVAIYNAVDRIFQKETELIDYRINSVTEGTDAQAEVHVNLLIEGKTVNGFGIDHDILQASCKAYVEAHAKFAAENVEKVGN</sequence>
<dbReference type="EC" id="2.3.3.13" evidence="1"/>
<dbReference type="EMBL" id="CP000730">
    <property type="protein sequence ID" value="ABX30049.1"/>
    <property type="molecule type" value="Genomic_DNA"/>
</dbReference>
<dbReference type="RefSeq" id="WP_000094576.1">
    <property type="nucleotide sequence ID" value="NC_010079.1"/>
</dbReference>
<dbReference type="SMR" id="A8Z4W0"/>
<dbReference type="KEGG" id="sax:USA300HOU_2052"/>
<dbReference type="HOGENOM" id="CLU_022158_0_1_9"/>
<dbReference type="UniPathway" id="UPA00048">
    <property type="reaction ID" value="UER00070"/>
</dbReference>
<dbReference type="GO" id="GO:0005737">
    <property type="term" value="C:cytoplasm"/>
    <property type="evidence" value="ECO:0007669"/>
    <property type="project" value="UniProtKB-SubCell"/>
</dbReference>
<dbReference type="GO" id="GO:0003852">
    <property type="term" value="F:2-isopropylmalate synthase activity"/>
    <property type="evidence" value="ECO:0007669"/>
    <property type="project" value="UniProtKB-UniRule"/>
</dbReference>
<dbReference type="GO" id="GO:0003985">
    <property type="term" value="F:acetyl-CoA C-acetyltransferase activity"/>
    <property type="evidence" value="ECO:0007669"/>
    <property type="project" value="UniProtKB-UniRule"/>
</dbReference>
<dbReference type="GO" id="GO:0030145">
    <property type="term" value="F:manganese ion binding"/>
    <property type="evidence" value="ECO:0007669"/>
    <property type="project" value="UniProtKB-UniRule"/>
</dbReference>
<dbReference type="GO" id="GO:0009098">
    <property type="term" value="P:L-leucine biosynthetic process"/>
    <property type="evidence" value="ECO:0007669"/>
    <property type="project" value="UniProtKB-UniRule"/>
</dbReference>
<dbReference type="CDD" id="cd07940">
    <property type="entry name" value="DRE_TIM_IPMS"/>
    <property type="match status" value="1"/>
</dbReference>
<dbReference type="FunFam" id="1.10.238.260:FF:000001">
    <property type="entry name" value="2-isopropylmalate synthase"/>
    <property type="match status" value="1"/>
</dbReference>
<dbReference type="FunFam" id="3.20.20.70:FF:000010">
    <property type="entry name" value="2-isopropylmalate synthase"/>
    <property type="match status" value="1"/>
</dbReference>
<dbReference type="FunFam" id="3.30.160.270:FF:000003">
    <property type="entry name" value="2-isopropylmalate synthase"/>
    <property type="match status" value="1"/>
</dbReference>
<dbReference type="Gene3D" id="1.10.238.260">
    <property type="match status" value="1"/>
</dbReference>
<dbReference type="Gene3D" id="3.30.160.270">
    <property type="match status" value="1"/>
</dbReference>
<dbReference type="Gene3D" id="3.20.20.70">
    <property type="entry name" value="Aldolase class I"/>
    <property type="match status" value="1"/>
</dbReference>
<dbReference type="HAMAP" id="MF_01025">
    <property type="entry name" value="LeuA_type1"/>
    <property type="match status" value="1"/>
</dbReference>
<dbReference type="InterPro" id="IPR050073">
    <property type="entry name" value="2-IPM_HCS-like"/>
</dbReference>
<dbReference type="InterPro" id="IPR013709">
    <property type="entry name" value="2-isopropylmalate_synth_dimer"/>
</dbReference>
<dbReference type="InterPro" id="IPR013785">
    <property type="entry name" value="Aldolase_TIM"/>
</dbReference>
<dbReference type="InterPro" id="IPR054691">
    <property type="entry name" value="LeuA/HCS_post-cat"/>
</dbReference>
<dbReference type="InterPro" id="IPR036230">
    <property type="entry name" value="LeuA_allosteric_dom_sf"/>
</dbReference>
<dbReference type="InterPro" id="IPR005671">
    <property type="entry name" value="LeuA_bact_synth"/>
</dbReference>
<dbReference type="InterPro" id="IPR000891">
    <property type="entry name" value="PYR_CT"/>
</dbReference>
<dbReference type="NCBIfam" id="TIGR00973">
    <property type="entry name" value="leuA_bact"/>
    <property type="match status" value="1"/>
</dbReference>
<dbReference type="NCBIfam" id="NF002086">
    <property type="entry name" value="PRK00915.1-3"/>
    <property type="match status" value="1"/>
</dbReference>
<dbReference type="NCBIfam" id="NF002088">
    <property type="entry name" value="PRK00915.1-5"/>
    <property type="match status" value="1"/>
</dbReference>
<dbReference type="PANTHER" id="PTHR10277:SF9">
    <property type="entry name" value="2-ISOPROPYLMALATE SYNTHASE 1, CHLOROPLASTIC-RELATED"/>
    <property type="match status" value="1"/>
</dbReference>
<dbReference type="PANTHER" id="PTHR10277">
    <property type="entry name" value="HOMOCITRATE SYNTHASE-RELATED"/>
    <property type="match status" value="1"/>
</dbReference>
<dbReference type="Pfam" id="PF22617">
    <property type="entry name" value="HCS_D2"/>
    <property type="match status" value="1"/>
</dbReference>
<dbReference type="Pfam" id="PF00682">
    <property type="entry name" value="HMGL-like"/>
    <property type="match status" value="1"/>
</dbReference>
<dbReference type="Pfam" id="PF08502">
    <property type="entry name" value="LeuA_dimer"/>
    <property type="match status" value="1"/>
</dbReference>
<dbReference type="SMART" id="SM00917">
    <property type="entry name" value="LeuA_dimer"/>
    <property type="match status" value="1"/>
</dbReference>
<dbReference type="SUPFAM" id="SSF110921">
    <property type="entry name" value="2-isopropylmalate synthase LeuA, allosteric (dimerisation) domain"/>
    <property type="match status" value="1"/>
</dbReference>
<dbReference type="SUPFAM" id="SSF51569">
    <property type="entry name" value="Aldolase"/>
    <property type="match status" value="1"/>
</dbReference>
<dbReference type="PROSITE" id="PS50991">
    <property type="entry name" value="PYR_CT"/>
    <property type="match status" value="1"/>
</dbReference>
<accession>A8Z4W0</accession>
<evidence type="ECO:0000255" key="1">
    <source>
        <dbReference type="HAMAP-Rule" id="MF_01025"/>
    </source>
</evidence>
<keyword id="KW-0028">Amino-acid biosynthesis</keyword>
<keyword id="KW-0100">Branched-chain amino acid biosynthesis</keyword>
<keyword id="KW-0963">Cytoplasm</keyword>
<keyword id="KW-0432">Leucine biosynthesis</keyword>
<keyword id="KW-0464">Manganese</keyword>
<keyword id="KW-0479">Metal-binding</keyword>
<keyword id="KW-0808">Transferase</keyword>
<organism>
    <name type="scientific">Staphylococcus aureus (strain USA300 / TCH1516)</name>
    <dbReference type="NCBI Taxonomy" id="451516"/>
    <lineage>
        <taxon>Bacteria</taxon>
        <taxon>Bacillati</taxon>
        <taxon>Bacillota</taxon>
        <taxon>Bacilli</taxon>
        <taxon>Bacillales</taxon>
        <taxon>Staphylococcaceae</taxon>
        <taxon>Staphylococcus</taxon>
    </lineage>
</organism>
<gene>
    <name evidence="1" type="primary">leuA</name>
    <name type="ordered locus">USA300HOU_2052</name>
</gene>
<protein>
    <recommendedName>
        <fullName evidence="1">2-isopropylmalate synthase</fullName>
        <ecNumber evidence="1">2.3.3.13</ecNumber>
    </recommendedName>
    <alternativeName>
        <fullName evidence="1">Alpha-IPM synthase</fullName>
    </alternativeName>
    <alternativeName>
        <fullName evidence="1">Alpha-isopropylmalate synthase</fullName>
    </alternativeName>
</protein>
<name>LEU1_STAAT</name>
<feature type="chain" id="PRO_1000149308" description="2-isopropylmalate synthase">
    <location>
        <begin position="1"/>
        <end position="509"/>
    </location>
</feature>
<feature type="domain" description="Pyruvate carboxyltransferase" evidence="1">
    <location>
        <begin position="5"/>
        <end position="267"/>
    </location>
</feature>
<feature type="region of interest" description="Regulatory domain" evidence="1">
    <location>
        <begin position="391"/>
        <end position="509"/>
    </location>
</feature>
<feature type="binding site" evidence="1">
    <location>
        <position position="14"/>
    </location>
    <ligand>
        <name>Mn(2+)</name>
        <dbReference type="ChEBI" id="CHEBI:29035"/>
    </ligand>
</feature>
<feature type="binding site" evidence="1">
    <location>
        <position position="202"/>
    </location>
    <ligand>
        <name>Mn(2+)</name>
        <dbReference type="ChEBI" id="CHEBI:29035"/>
    </ligand>
</feature>
<feature type="binding site" evidence="1">
    <location>
        <position position="204"/>
    </location>
    <ligand>
        <name>Mn(2+)</name>
        <dbReference type="ChEBI" id="CHEBI:29035"/>
    </ligand>
</feature>
<feature type="binding site" evidence="1">
    <location>
        <position position="238"/>
    </location>
    <ligand>
        <name>Mn(2+)</name>
        <dbReference type="ChEBI" id="CHEBI:29035"/>
    </ligand>
</feature>